<proteinExistence type="evidence at protein level"/>
<dbReference type="EMBL" id="ABSU01000011">
    <property type="protein sequence ID" value="EFE33116.1"/>
    <property type="molecule type" value="Genomic_DNA"/>
</dbReference>
<dbReference type="RefSeq" id="XP_003013756.1">
    <property type="nucleotide sequence ID" value="XM_003013710.1"/>
</dbReference>
<dbReference type="SMR" id="D4AUF1"/>
<dbReference type="STRING" id="663331.D4AUF1"/>
<dbReference type="GeneID" id="9526946"/>
<dbReference type="KEGG" id="abe:ARB_07867"/>
<dbReference type="eggNOG" id="KOG4157">
    <property type="taxonomic scope" value="Eukaryota"/>
</dbReference>
<dbReference type="HOGENOM" id="CLU_003527_0_0_1"/>
<dbReference type="OMA" id="WYPSAMI"/>
<dbReference type="Proteomes" id="UP000008866">
    <property type="component" value="Unassembled WGS sequence"/>
</dbReference>
<dbReference type="GO" id="GO:0005576">
    <property type="term" value="C:extracellular region"/>
    <property type="evidence" value="ECO:0007669"/>
    <property type="project" value="UniProtKB-SubCell"/>
</dbReference>
<dbReference type="CDD" id="cd02851">
    <property type="entry name" value="E_set_GO_C"/>
    <property type="match status" value="1"/>
</dbReference>
<dbReference type="Gene3D" id="2.130.10.80">
    <property type="entry name" value="Galactose oxidase/kelch, beta-propeller"/>
    <property type="match status" value="1"/>
</dbReference>
<dbReference type="Gene3D" id="2.60.40.10">
    <property type="entry name" value="Immunoglobulins"/>
    <property type="match status" value="1"/>
</dbReference>
<dbReference type="InterPro" id="IPR011043">
    <property type="entry name" value="Gal_Oxase/kelch_b-propeller"/>
</dbReference>
<dbReference type="InterPro" id="IPR037293">
    <property type="entry name" value="Gal_Oxidase_central_sf"/>
</dbReference>
<dbReference type="InterPro" id="IPR009880">
    <property type="entry name" value="Glyoxal_oxidase_N"/>
</dbReference>
<dbReference type="InterPro" id="IPR015202">
    <property type="entry name" value="GO-like_E_set"/>
</dbReference>
<dbReference type="InterPro" id="IPR013783">
    <property type="entry name" value="Ig-like_fold"/>
</dbReference>
<dbReference type="InterPro" id="IPR014756">
    <property type="entry name" value="Ig_E-set"/>
</dbReference>
<dbReference type="InterPro" id="IPR002889">
    <property type="entry name" value="WSC_carb-bd"/>
</dbReference>
<dbReference type="PANTHER" id="PTHR32208:SF105">
    <property type="entry name" value="COPPER RADICAL OXIDASE"/>
    <property type="match status" value="1"/>
</dbReference>
<dbReference type="PANTHER" id="PTHR32208">
    <property type="entry name" value="SECRETED PROTEIN-RELATED"/>
    <property type="match status" value="1"/>
</dbReference>
<dbReference type="Pfam" id="PF07250">
    <property type="entry name" value="Glyoxal_oxid_N"/>
    <property type="match status" value="1"/>
</dbReference>
<dbReference type="Pfam" id="PF09118">
    <property type="entry name" value="GO-like_E_set"/>
    <property type="match status" value="1"/>
</dbReference>
<dbReference type="Pfam" id="PF01822">
    <property type="entry name" value="WSC"/>
    <property type="match status" value="3"/>
</dbReference>
<dbReference type="SMART" id="SM00321">
    <property type="entry name" value="WSC"/>
    <property type="match status" value="3"/>
</dbReference>
<dbReference type="SUPFAM" id="SSF81296">
    <property type="entry name" value="E set domains"/>
    <property type="match status" value="1"/>
</dbReference>
<dbReference type="SUPFAM" id="SSF50965">
    <property type="entry name" value="Galactose oxidase, central domain"/>
    <property type="match status" value="1"/>
</dbReference>
<dbReference type="PROSITE" id="PS51212">
    <property type="entry name" value="WSC"/>
    <property type="match status" value="3"/>
</dbReference>
<keyword id="KW-0325">Glycoprotein</keyword>
<keyword id="KW-1185">Reference proteome</keyword>
<keyword id="KW-0677">Repeat</keyword>
<keyword id="KW-0964">Secreted</keyword>
<keyword id="KW-0732">Signal</keyword>
<accession>D4AUF1</accession>
<protein>
    <recommendedName>
        <fullName evidence="7">WSC domain-containing protein ARB_07867</fullName>
    </recommendedName>
</protein>
<gene>
    <name type="ORF">ARB_07867</name>
</gene>
<evidence type="ECO:0000255" key="1"/>
<evidence type="ECO:0000255" key="2">
    <source>
        <dbReference type="PROSITE-ProRule" id="PRU00498"/>
    </source>
</evidence>
<evidence type="ECO:0000255" key="3">
    <source>
        <dbReference type="PROSITE-ProRule" id="PRU00558"/>
    </source>
</evidence>
<evidence type="ECO:0000256" key="4">
    <source>
        <dbReference type="SAM" id="MobiDB-lite"/>
    </source>
</evidence>
<evidence type="ECO:0000269" key="5">
    <source>
    </source>
</evidence>
<evidence type="ECO:0000269" key="6">
    <source>
    </source>
</evidence>
<evidence type="ECO:0000305" key="7"/>
<reference key="1">
    <citation type="journal article" date="2011" name="Genome Biol.">
        <title>Comparative and functional genomics provide insights into the pathogenicity of dermatophytic fungi.</title>
        <authorList>
            <person name="Burmester A."/>
            <person name="Shelest E."/>
            <person name="Gloeckner G."/>
            <person name="Heddergott C."/>
            <person name="Schindler S."/>
            <person name="Staib P."/>
            <person name="Heidel A."/>
            <person name="Felder M."/>
            <person name="Petzold A."/>
            <person name="Szafranski K."/>
            <person name="Feuermann M."/>
            <person name="Pedruzzi I."/>
            <person name="Priebe S."/>
            <person name="Groth M."/>
            <person name="Winkler R."/>
            <person name="Li W."/>
            <person name="Kniemeyer O."/>
            <person name="Schroeckh V."/>
            <person name="Hertweck C."/>
            <person name="Hube B."/>
            <person name="White T.C."/>
            <person name="Platzer M."/>
            <person name="Guthke R."/>
            <person name="Heitman J."/>
            <person name="Woestemeyer J."/>
            <person name="Zipfel P.F."/>
            <person name="Monod M."/>
            <person name="Brakhage A.A."/>
        </authorList>
    </citation>
    <scope>NUCLEOTIDE SEQUENCE [LARGE SCALE GENOMIC DNA]</scope>
    <scope>IDENTIFICATION BY MASS SPECTROMETRY</scope>
    <scope>SUBCELLULAR LOCATION</scope>
    <source>
        <strain>ATCC MYA-4681 / CBS 112371</strain>
    </source>
</reference>
<reference key="2">
    <citation type="journal article" date="2011" name="Proteomics">
        <title>Identification of novel secreted proteases during extracellular proteolysis by dermatophytes at acidic pH.</title>
        <authorList>
            <person name="Sriranganadane D."/>
            <person name="Waridel P."/>
            <person name="Salamin K."/>
            <person name="Feuermann M."/>
            <person name="Mignon B."/>
            <person name="Staib P."/>
            <person name="Neuhaus J.M."/>
            <person name="Quadroni M."/>
            <person name="Monod M."/>
        </authorList>
    </citation>
    <scope>IDENTIFICATION BY MASS SPECTROMETRY</scope>
    <scope>SUBCELLULAR LOCATION</scope>
</reference>
<sequence>MAGILSVVHIIIIFIVRFKSSTDSLITVVVSASFQRANIYKFSLLAKLAHGAALIPRADADTWTYLGCYTDQVGARTLGQVGYTLGGPGNMTVANCQNGCASQGYSLAGVEYSSECWCDNQLRNGGGPAPDGEAMCSMPCNGNPEQKCGGPGRLNLYQNTAIKPTDTMTTSAPSTETGSPTTTSVPEPTQGLPDGWQYSGCYQDNVNGGRVMFKMLPDSSTLTIESCVAMCVKLGYTVAGAEYSKQCFCDNYLRNAAPQAIESECSMTCSGNTQQKCGGPSRLSVYSKGNLTVLPIPVPQTGGLPGGWKYQGCLQDNVNMKRTFPYQIVDKTNNTATNCLSRCSKFGFGAGGMTYSEECFCGDFEDIAAAGAKLVPEAMCSQTCSGNATAICGAGNLITYYRWMDEPLQKWNRPTGINAGRYDFLIGGVLVPLITTVGINGKITFQEKSGTGDPNTTGAYEFDPYYEKDFSKAWREMHVKTDIFCAGGLVLPDKVGRQLTVGGWSGISTEGVRLYWPDGSPGKPGVNDWHESPDDLRLQNGRWYPTAMTMSNGSILVVGGEEGSNGAPVPTLEILPRVGPVLFMDWLKRTDPNNLYPYLTPLPGGNILAAYYNEARILDERTFDTVKTLPNIPGAVNNDAGGRTYPLEGTMVLLPQKAPYTEPLGVLICGGSTPYGGDALDNCVSIQPEVPNAEWVIERMPSKRVLTCMAGLPDGTFLILNGARKGVAGFGLAEDPNLGAVLYDPSKPVNQRMSIMANTTIARMYHSEAILMADGRVLVSGSDPQDPRFPQERRVEVFLPPYILSGARRPTFTIANKDWAYGGKYKIKITSGNQSRIKISLMGMVSSTHGNSFGSRTIFPAFSCSFGTCTITAPPDSHTCPPGWFMLFVLDGPTPSVASFVRIGGDPGRLGDWPATGGFPLPGV</sequence>
<feature type="signal peptide" evidence="1">
    <location>
        <begin position="1"/>
        <end position="24"/>
    </location>
</feature>
<feature type="chain" id="PRO_0000434927" description="WSC domain-containing protein ARB_07867">
    <location>
        <begin position="25"/>
        <end position="924"/>
    </location>
</feature>
<feature type="domain" description="WSC 1" evidence="3">
    <location>
        <begin position="62"/>
        <end position="160"/>
    </location>
</feature>
<feature type="domain" description="WSC 2" evidence="3">
    <location>
        <begin position="195"/>
        <end position="289"/>
    </location>
</feature>
<feature type="domain" description="WSC 3" evidence="3">
    <location>
        <begin position="307"/>
        <end position="404"/>
    </location>
</feature>
<feature type="region of interest" description="Disordered" evidence="4">
    <location>
        <begin position="166"/>
        <end position="190"/>
    </location>
</feature>
<feature type="compositionally biased region" description="Low complexity" evidence="4">
    <location>
        <begin position="169"/>
        <end position="189"/>
    </location>
</feature>
<feature type="glycosylation site" description="N-linked (GlcNAc...) asparagine" evidence="2">
    <location>
        <position position="90"/>
    </location>
</feature>
<feature type="glycosylation site" description="N-linked (GlcNAc...) asparagine" evidence="2">
    <location>
        <position position="290"/>
    </location>
</feature>
<feature type="glycosylation site" description="N-linked (GlcNAc...) asparagine" evidence="2">
    <location>
        <position position="333"/>
    </location>
</feature>
<feature type="glycosylation site" description="N-linked (GlcNAc...) asparagine" evidence="2">
    <location>
        <position position="387"/>
    </location>
</feature>
<feature type="glycosylation site" description="N-linked (GlcNAc...) asparagine" evidence="2">
    <location>
        <position position="455"/>
    </location>
</feature>
<feature type="glycosylation site" description="N-linked (GlcNAc...) asparagine" evidence="2">
    <location>
        <position position="552"/>
    </location>
</feature>
<feature type="glycosylation site" description="N-linked (GlcNAc...) asparagine" evidence="2">
    <location>
        <position position="758"/>
    </location>
</feature>
<feature type="glycosylation site" description="N-linked (GlcNAc...) asparagine" evidence="2">
    <location>
        <position position="833"/>
    </location>
</feature>
<comment type="subcellular location">
    <subcellularLocation>
        <location evidence="5 6">Secreted</location>
    </subcellularLocation>
</comment>
<name>WSCD1_ARTBC</name>
<organism>
    <name type="scientific">Arthroderma benhamiae (strain ATCC MYA-4681 / CBS 112371)</name>
    <name type="common">Trichophyton mentagrophytes</name>
    <dbReference type="NCBI Taxonomy" id="663331"/>
    <lineage>
        <taxon>Eukaryota</taxon>
        <taxon>Fungi</taxon>
        <taxon>Dikarya</taxon>
        <taxon>Ascomycota</taxon>
        <taxon>Pezizomycotina</taxon>
        <taxon>Eurotiomycetes</taxon>
        <taxon>Eurotiomycetidae</taxon>
        <taxon>Onygenales</taxon>
        <taxon>Arthrodermataceae</taxon>
        <taxon>Trichophyton</taxon>
    </lineage>
</organism>